<comment type="similarity">
    <text evidence="1">Belongs to the UPF0342 family.</text>
</comment>
<organism>
    <name type="scientific">Lacticaseibacillus casei (strain BL23)</name>
    <name type="common">Lactobacillus casei</name>
    <dbReference type="NCBI Taxonomy" id="543734"/>
    <lineage>
        <taxon>Bacteria</taxon>
        <taxon>Bacillati</taxon>
        <taxon>Bacillota</taxon>
        <taxon>Bacilli</taxon>
        <taxon>Lactobacillales</taxon>
        <taxon>Lactobacillaceae</taxon>
        <taxon>Lacticaseibacillus</taxon>
    </lineage>
</organism>
<sequence length="114" mass="13220">MANVYDTANQMAADIKTTQEFQDLKKAFDLLKLDTVAYGLFQQFQQKQYEMQQKSMQGQDFTDDEVKSLQELGDKMRDIQPIQNLMAKEQGLSQMMDELNKIISQPIIDVYQGK</sequence>
<accession>B3WF72</accession>
<evidence type="ECO:0000255" key="1">
    <source>
        <dbReference type="HAMAP-Rule" id="MF_01526"/>
    </source>
</evidence>
<gene>
    <name type="ordered locus">LCABL_19440</name>
</gene>
<protein>
    <recommendedName>
        <fullName evidence="1">UPF0342 protein LCABL_19440</fullName>
    </recommendedName>
</protein>
<name>Y1944_LACCB</name>
<proteinExistence type="inferred from homology"/>
<dbReference type="EMBL" id="FM177140">
    <property type="protein sequence ID" value="CAQ67023.1"/>
    <property type="molecule type" value="Genomic_DNA"/>
</dbReference>
<dbReference type="SMR" id="B3WF72"/>
<dbReference type="KEGG" id="lcb:LCABL_19440"/>
<dbReference type="HOGENOM" id="CLU_140243_3_1_9"/>
<dbReference type="Gene3D" id="1.20.1500.10">
    <property type="entry name" value="YheA/YmcA-like"/>
    <property type="match status" value="1"/>
</dbReference>
<dbReference type="HAMAP" id="MF_01526">
    <property type="entry name" value="UPF0342"/>
    <property type="match status" value="1"/>
</dbReference>
<dbReference type="InterPro" id="IPR010368">
    <property type="entry name" value="Com_YlbF"/>
</dbReference>
<dbReference type="InterPro" id="IPR023378">
    <property type="entry name" value="YheA/YmcA-like_dom_sf"/>
</dbReference>
<dbReference type="Pfam" id="PF06133">
    <property type="entry name" value="Com_YlbF"/>
    <property type="match status" value="1"/>
</dbReference>
<dbReference type="SUPFAM" id="SSF158622">
    <property type="entry name" value="YheA/YmcA-like"/>
    <property type="match status" value="1"/>
</dbReference>
<reference key="1">
    <citation type="submission" date="2008-06" db="EMBL/GenBank/DDBJ databases">
        <title>Lactobacillus casei BL23 complete genome sequence.</title>
        <authorList>
            <person name="Maze A."/>
            <person name="Boel G."/>
            <person name="Bourand A."/>
            <person name="Loux V."/>
            <person name="Gibrat J.F."/>
            <person name="Zuniga M."/>
            <person name="Hartke A."/>
            <person name="Deutscher J."/>
        </authorList>
    </citation>
    <scope>NUCLEOTIDE SEQUENCE [LARGE SCALE GENOMIC DNA]</scope>
    <source>
        <strain>BL23</strain>
    </source>
</reference>
<feature type="chain" id="PRO_1000198523" description="UPF0342 protein LCABL_19440">
    <location>
        <begin position="1"/>
        <end position="114"/>
    </location>
</feature>